<organism>
    <name type="scientific">Rattus norvegicus</name>
    <name type="common">Rat</name>
    <dbReference type="NCBI Taxonomy" id="10116"/>
    <lineage>
        <taxon>Eukaryota</taxon>
        <taxon>Metazoa</taxon>
        <taxon>Chordata</taxon>
        <taxon>Craniata</taxon>
        <taxon>Vertebrata</taxon>
        <taxon>Euteleostomi</taxon>
        <taxon>Mammalia</taxon>
        <taxon>Eutheria</taxon>
        <taxon>Euarchontoglires</taxon>
        <taxon>Glires</taxon>
        <taxon>Rodentia</taxon>
        <taxon>Myomorpha</taxon>
        <taxon>Muroidea</taxon>
        <taxon>Muridae</taxon>
        <taxon>Murinae</taxon>
        <taxon>Rattus</taxon>
    </lineage>
</organism>
<reference key="1">
    <citation type="journal article" date="2004" name="Nature">
        <title>Genome sequence of the Brown Norway rat yields insights into mammalian evolution.</title>
        <authorList>
            <person name="Gibbs R.A."/>
            <person name="Weinstock G.M."/>
            <person name="Metzker M.L."/>
            <person name="Muzny D.M."/>
            <person name="Sodergren E.J."/>
            <person name="Scherer S."/>
            <person name="Scott G."/>
            <person name="Steffen D."/>
            <person name="Worley K.C."/>
            <person name="Burch P.E."/>
            <person name="Okwuonu G."/>
            <person name="Hines S."/>
            <person name="Lewis L."/>
            <person name="Deramo C."/>
            <person name="Delgado O."/>
            <person name="Dugan-Rocha S."/>
            <person name="Miner G."/>
            <person name="Morgan M."/>
            <person name="Hawes A."/>
            <person name="Gill R."/>
            <person name="Holt R.A."/>
            <person name="Adams M.D."/>
            <person name="Amanatides P.G."/>
            <person name="Baden-Tillson H."/>
            <person name="Barnstead M."/>
            <person name="Chin S."/>
            <person name="Evans C.A."/>
            <person name="Ferriera S."/>
            <person name="Fosler C."/>
            <person name="Glodek A."/>
            <person name="Gu Z."/>
            <person name="Jennings D."/>
            <person name="Kraft C.L."/>
            <person name="Nguyen T."/>
            <person name="Pfannkoch C.M."/>
            <person name="Sitter C."/>
            <person name="Sutton G.G."/>
            <person name="Venter J.C."/>
            <person name="Woodage T."/>
            <person name="Smith D."/>
            <person name="Lee H.-M."/>
            <person name="Gustafson E."/>
            <person name="Cahill P."/>
            <person name="Kana A."/>
            <person name="Doucette-Stamm L."/>
            <person name="Weinstock K."/>
            <person name="Fechtel K."/>
            <person name="Weiss R.B."/>
            <person name="Dunn D.M."/>
            <person name="Green E.D."/>
            <person name="Blakesley R.W."/>
            <person name="Bouffard G.G."/>
            <person name="De Jong P.J."/>
            <person name="Osoegawa K."/>
            <person name="Zhu B."/>
            <person name="Marra M."/>
            <person name="Schein J."/>
            <person name="Bosdet I."/>
            <person name="Fjell C."/>
            <person name="Jones S."/>
            <person name="Krzywinski M."/>
            <person name="Mathewson C."/>
            <person name="Siddiqui A."/>
            <person name="Wye N."/>
            <person name="McPherson J."/>
            <person name="Zhao S."/>
            <person name="Fraser C.M."/>
            <person name="Shetty J."/>
            <person name="Shatsman S."/>
            <person name="Geer K."/>
            <person name="Chen Y."/>
            <person name="Abramzon S."/>
            <person name="Nierman W.C."/>
            <person name="Havlak P.H."/>
            <person name="Chen R."/>
            <person name="Durbin K.J."/>
            <person name="Egan A."/>
            <person name="Ren Y."/>
            <person name="Song X.-Z."/>
            <person name="Li B."/>
            <person name="Liu Y."/>
            <person name="Qin X."/>
            <person name="Cawley S."/>
            <person name="Cooney A.J."/>
            <person name="D'Souza L.M."/>
            <person name="Martin K."/>
            <person name="Wu J.Q."/>
            <person name="Gonzalez-Garay M.L."/>
            <person name="Jackson A.R."/>
            <person name="Kalafus K.J."/>
            <person name="McLeod M.P."/>
            <person name="Milosavljevic A."/>
            <person name="Virk D."/>
            <person name="Volkov A."/>
            <person name="Wheeler D.A."/>
            <person name="Zhang Z."/>
            <person name="Bailey J.A."/>
            <person name="Eichler E.E."/>
            <person name="Tuzun E."/>
            <person name="Birney E."/>
            <person name="Mongin E."/>
            <person name="Ureta-Vidal A."/>
            <person name="Woodwark C."/>
            <person name="Zdobnov E."/>
            <person name="Bork P."/>
            <person name="Suyama M."/>
            <person name="Torrents D."/>
            <person name="Alexandersson M."/>
            <person name="Trask B.J."/>
            <person name="Young J.M."/>
            <person name="Huang H."/>
            <person name="Wang H."/>
            <person name="Xing H."/>
            <person name="Daniels S."/>
            <person name="Gietzen D."/>
            <person name="Schmidt J."/>
            <person name="Stevens K."/>
            <person name="Vitt U."/>
            <person name="Wingrove J."/>
            <person name="Camara F."/>
            <person name="Mar Alba M."/>
            <person name="Abril J.F."/>
            <person name="Guigo R."/>
            <person name="Smit A."/>
            <person name="Dubchak I."/>
            <person name="Rubin E.M."/>
            <person name="Couronne O."/>
            <person name="Poliakov A."/>
            <person name="Huebner N."/>
            <person name="Ganten D."/>
            <person name="Goesele C."/>
            <person name="Hummel O."/>
            <person name="Kreitler T."/>
            <person name="Lee Y.-A."/>
            <person name="Monti J."/>
            <person name="Schulz H."/>
            <person name="Zimdahl H."/>
            <person name="Himmelbauer H."/>
            <person name="Lehrach H."/>
            <person name="Jacob H.J."/>
            <person name="Bromberg S."/>
            <person name="Gullings-Handley J."/>
            <person name="Jensen-Seaman M.I."/>
            <person name="Kwitek A.E."/>
            <person name="Lazar J."/>
            <person name="Pasko D."/>
            <person name="Tonellato P.J."/>
            <person name="Twigger S."/>
            <person name="Ponting C.P."/>
            <person name="Duarte J.M."/>
            <person name="Rice S."/>
            <person name="Goodstadt L."/>
            <person name="Beatson S.A."/>
            <person name="Emes R.D."/>
            <person name="Winter E.E."/>
            <person name="Webber C."/>
            <person name="Brandt P."/>
            <person name="Nyakatura G."/>
            <person name="Adetobi M."/>
            <person name="Chiaromonte F."/>
            <person name="Elnitski L."/>
            <person name="Eswara P."/>
            <person name="Hardison R.C."/>
            <person name="Hou M."/>
            <person name="Kolbe D."/>
            <person name="Makova K."/>
            <person name="Miller W."/>
            <person name="Nekrutenko A."/>
            <person name="Riemer C."/>
            <person name="Schwartz S."/>
            <person name="Taylor J."/>
            <person name="Yang S."/>
            <person name="Zhang Y."/>
            <person name="Lindpaintner K."/>
            <person name="Andrews T.D."/>
            <person name="Caccamo M."/>
            <person name="Clamp M."/>
            <person name="Clarke L."/>
            <person name="Curwen V."/>
            <person name="Durbin R.M."/>
            <person name="Eyras E."/>
            <person name="Searle S.M."/>
            <person name="Cooper G.M."/>
            <person name="Batzoglou S."/>
            <person name="Brudno M."/>
            <person name="Sidow A."/>
            <person name="Stone E.A."/>
            <person name="Payseur B.A."/>
            <person name="Bourque G."/>
            <person name="Lopez-Otin C."/>
            <person name="Puente X.S."/>
            <person name="Chakrabarti K."/>
            <person name="Chatterji S."/>
            <person name="Dewey C."/>
            <person name="Pachter L."/>
            <person name="Bray N."/>
            <person name="Yap V.B."/>
            <person name="Caspi A."/>
            <person name="Tesler G."/>
            <person name="Pevzner P.A."/>
            <person name="Haussler D."/>
            <person name="Roskin K.M."/>
            <person name="Baertsch R."/>
            <person name="Clawson H."/>
            <person name="Furey T.S."/>
            <person name="Hinrichs A.S."/>
            <person name="Karolchik D."/>
            <person name="Kent W.J."/>
            <person name="Rosenbloom K.R."/>
            <person name="Trumbower H."/>
            <person name="Weirauch M."/>
            <person name="Cooper D.N."/>
            <person name="Stenson P.D."/>
            <person name="Ma B."/>
            <person name="Brent M."/>
            <person name="Arumugam M."/>
            <person name="Shteynberg D."/>
            <person name="Copley R.R."/>
            <person name="Taylor M.S."/>
            <person name="Riethman H."/>
            <person name="Mudunuri U."/>
            <person name="Peterson J."/>
            <person name="Guyer M."/>
            <person name="Felsenfeld A."/>
            <person name="Old S."/>
            <person name="Mockrin S."/>
            <person name="Collins F.S."/>
        </authorList>
    </citation>
    <scope>NUCLEOTIDE SEQUENCE [LARGE SCALE GENOMIC DNA]</scope>
    <source>
        <strain>Brown Norway</strain>
    </source>
</reference>
<reference key="2">
    <citation type="journal article" date="2012" name="Nat. Commun.">
        <title>Quantitative maps of protein phosphorylation sites across 14 different rat organs and tissues.</title>
        <authorList>
            <person name="Lundby A."/>
            <person name="Secher A."/>
            <person name="Lage K."/>
            <person name="Nordsborg N.B."/>
            <person name="Dmytriyev A."/>
            <person name="Lundby C."/>
            <person name="Olsen J.V."/>
        </authorList>
    </citation>
    <scope>IDENTIFICATION BY MASS SPECTROMETRY [LARGE SCALE ANALYSIS]</scope>
</reference>
<reference key="3">
    <citation type="journal article" date="2012" name="PLoS ONE">
        <title>Glycerol-3-phosphate acyltransferase-2 is expressed in spermatic germ cells and incorporates arachidonic acid into triacylglycerols.</title>
        <authorList>
            <person name="Cattaneo E.R."/>
            <person name="Pellon-Maison M."/>
            <person name="Rabassa M.E."/>
            <person name="Lacunza E."/>
            <person name="Coleman R.A."/>
            <person name="Gonzalez-Baro M.R."/>
        </authorList>
    </citation>
    <scope>SUBCELLULAR LOCATION</scope>
    <scope>TISSUE SPECIFICITY</scope>
</reference>
<sequence length="801" mass="88969">METMLKSNPQMQQRNNHSGQETSLWSSGFGMKMEAITPFLGKYRPFMGRCCQTCTPKSWESLFHRSIMDLGFCNVILVKEENTRFRGWLVRRLCYFLWSLEQHIPTSSDASQMIMENTGVQNILLGKVPGAAGEGQAPDLVKKEVQRILGHIQTTPRPFLLRLFSWALLWFLNRLFLNVQLHKGQMKMVHKAAQEGSPLVFLSTHKSLLDGFLLPFVLFSQGLGVLRVALDSRTCSPALRALLRKLGGLFLPPEANLSLDSSEGILARAVVRATVEQLLTSGQPLLIFLEEAPGYPGPRLSALGQAWLGLVVQAVQAGIVPDATLVPVATAYDLVPDAPCNMTHDLAPLGLWTGALAIFRRLCNCWGCNRRVCVRVHLAQPFSLQEYTINARSCWGSRQTLEHLLQPIVLGECSVVPDTEKEQEWTPPTSLLLALKEEDQLLVRRLSRHVLSASVASSAVMSTAIMATLLLLKHQKGVVLSQLLGEFSWLTEETLLRGFDVGFSGQLRCLAQHTLSLLRAHVVLLRVHQGDLVVVPRPGPGLTHLARLSMELLPTFLSEAVGACAVRGLLAGRVPPEGPWELQGIELLSQNELYRQILLLLHLLPQDLLLPQPCQSSYCYCQEVLDRLIQCGLLVAEETPGSRPACDTGRQHLSAKLLWKPSGDFTDSESDDFEEPGGRCFRLSQQSRCPDFFLFLCRLLSPILKAFAQAATFLHLGQLPDSEVGYSEKLLQFLQACAQEEGIFECADPNLAISAIWTFKDLGVLQQIPSPTGPQLHLSPTFASRDNQDKLEQFIRQFICS</sequence>
<name>GPAT2_RAT</name>
<evidence type="ECO:0000250" key="1"/>
<evidence type="ECO:0000250" key="2">
    <source>
        <dbReference type="UniProtKB" id="Q14DK4"/>
    </source>
</evidence>
<evidence type="ECO:0000255" key="3"/>
<evidence type="ECO:0000256" key="4">
    <source>
        <dbReference type="SAM" id="MobiDB-lite"/>
    </source>
</evidence>
<evidence type="ECO:0000269" key="5">
    <source>
    </source>
</evidence>
<evidence type="ECO:0000305" key="6"/>
<evidence type="ECO:0000312" key="7">
    <source>
        <dbReference type="RGD" id="1304904"/>
    </source>
</evidence>
<protein>
    <recommendedName>
        <fullName evidence="6">Glycerol-3-phosphate acyltransferase 2, mitochondrial</fullName>
        <ecNumber evidence="2">2.3.1.15</ecNumber>
    </recommendedName>
    <alternativeName>
        <fullName evidence="2">1-acylglycerol-3-phosphate O-acyltransferase GPAT2</fullName>
        <ecNumber evidence="2">2.3.1.51</ecNumber>
    </alternativeName>
</protein>
<comment type="function">
    <text evidence="2">Transfers an acyl-group from acyl-ACP to the sn-1 position of glycerol-3-phosphate producing a lysophosphatidic acid (LPA), an essential step for the triacylglycerol (TAG) and glycerophospholipids. In vitro also transfers an acyl-group from acyl-ACP to the LPA producing a phosphatidic acid (PA). Prefers arachidonoyl-CoA as the acyl donor. Required for primary processing step during piRNA biosynthesis. Molecular mechanisms by which it promotes piRNA biosynthesis are unclear and do not involve its acyltransferase activity.</text>
</comment>
<comment type="catalytic activity">
    <reaction evidence="2">
        <text>sn-glycerol 3-phosphate + an acyl-CoA = a 1-acyl-sn-glycero-3-phosphate + CoA</text>
        <dbReference type="Rhea" id="RHEA:15325"/>
        <dbReference type="ChEBI" id="CHEBI:57287"/>
        <dbReference type="ChEBI" id="CHEBI:57597"/>
        <dbReference type="ChEBI" id="CHEBI:57970"/>
        <dbReference type="ChEBI" id="CHEBI:58342"/>
        <dbReference type="EC" id="2.3.1.15"/>
    </reaction>
    <physiologicalReaction direction="left-to-right" evidence="2">
        <dbReference type="Rhea" id="RHEA:15326"/>
    </physiologicalReaction>
</comment>
<comment type="catalytic activity">
    <reaction evidence="2">
        <text>a 1-acyl-sn-glycero-3-phosphate + an acyl-CoA = a 1,2-diacyl-sn-glycero-3-phosphate + CoA</text>
        <dbReference type="Rhea" id="RHEA:19709"/>
        <dbReference type="ChEBI" id="CHEBI:57287"/>
        <dbReference type="ChEBI" id="CHEBI:57970"/>
        <dbReference type="ChEBI" id="CHEBI:58342"/>
        <dbReference type="ChEBI" id="CHEBI:58608"/>
        <dbReference type="EC" id="2.3.1.51"/>
    </reaction>
    <physiologicalReaction direction="left-to-right" evidence="2">
        <dbReference type="Rhea" id="RHEA:19710"/>
    </physiologicalReaction>
</comment>
<comment type="catalytic activity">
    <reaction evidence="2">
        <text>1-(9Z-octadecenoyl)-sn-glycero-3-phosphate + (9Z)-octadecenoyl-CoA = 1,2-di-(9Z-octadecenoyl)-sn-glycero-3-phosphate + CoA</text>
        <dbReference type="Rhea" id="RHEA:37131"/>
        <dbReference type="ChEBI" id="CHEBI:57287"/>
        <dbReference type="ChEBI" id="CHEBI:57387"/>
        <dbReference type="ChEBI" id="CHEBI:74544"/>
        <dbReference type="ChEBI" id="CHEBI:74546"/>
    </reaction>
    <physiologicalReaction direction="left-to-right" evidence="2">
        <dbReference type="Rhea" id="RHEA:37132"/>
    </physiologicalReaction>
</comment>
<comment type="catalytic activity">
    <reaction evidence="2">
        <text>1-(9Z-octadecenoyl)-sn-glycero-3-phosphate + (5Z,8Z,11Z,14Z)-eicosatetraenoyl-CoA = 1-(9Z)-octadecenoyl-2-(5Z,8Z,11Z,14Z)-eicosatetraenoyl-sn-glycero-3-phosphate + CoA</text>
        <dbReference type="Rhea" id="RHEA:37443"/>
        <dbReference type="ChEBI" id="CHEBI:57287"/>
        <dbReference type="ChEBI" id="CHEBI:57368"/>
        <dbReference type="ChEBI" id="CHEBI:74544"/>
        <dbReference type="ChEBI" id="CHEBI:74928"/>
    </reaction>
    <physiologicalReaction direction="left-to-right" evidence="2">
        <dbReference type="Rhea" id="RHEA:37444"/>
    </physiologicalReaction>
</comment>
<comment type="catalytic activity">
    <reaction evidence="2">
        <text>(5Z,8Z,11Z,14Z)-eicosatetraenoyl-CoA + sn-glycerol 3-phosphate = 1-(5Z,8Z,11Z,14Z-eicosatetraenoyl)-sn-glycero-3-phosphate + CoA</text>
        <dbReference type="Rhea" id="RHEA:37463"/>
        <dbReference type="ChEBI" id="CHEBI:57287"/>
        <dbReference type="ChEBI" id="CHEBI:57368"/>
        <dbReference type="ChEBI" id="CHEBI:57597"/>
        <dbReference type="ChEBI" id="CHEBI:74938"/>
    </reaction>
    <physiologicalReaction direction="left-to-right" evidence="2">
        <dbReference type="Rhea" id="RHEA:37464"/>
    </physiologicalReaction>
</comment>
<comment type="activity regulation">
    <text evidence="2">Inhibited by N-ethylmaleimide (NEM).</text>
</comment>
<comment type="pathway">
    <text evidence="2">Phospholipid metabolism; CDP-diacylglycerol biosynthesis; CDP-diacylglycerol from sn-glycerol 3-phosphate: step 1/3.</text>
</comment>
<comment type="subunit">
    <text evidence="2">Interacts with PIWIL2.</text>
</comment>
<comment type="subcellular location">
    <subcellularLocation>
        <location evidence="5">Mitochondrion outer membrane</location>
        <topology evidence="2">Multi-pass membrane protein</topology>
    </subcellularLocation>
</comment>
<comment type="tissue specificity">
    <text evidence="5">Expressed in spermatocytes and spermatides.</text>
</comment>
<comment type="domain">
    <text evidence="1">The HXXXXD motif is essential for acyltransferase activity and may constitute the binding site for the phosphate moiety of the glycerol-3-phosphate.</text>
</comment>
<comment type="similarity">
    <text evidence="6">Belongs to the GPAT/DAPAT family.</text>
</comment>
<keyword id="KW-0012">Acyltransferase</keyword>
<keyword id="KW-0472">Membrane</keyword>
<keyword id="KW-0496">Mitochondrion</keyword>
<keyword id="KW-1000">Mitochondrion outer membrane</keyword>
<keyword id="KW-1185">Reference proteome</keyword>
<keyword id="KW-0808">Transferase</keyword>
<keyword id="KW-0812">Transmembrane</keyword>
<keyword id="KW-1133">Transmembrane helix</keyword>
<proteinExistence type="evidence at protein level"/>
<dbReference type="EC" id="2.3.1.15" evidence="2"/>
<dbReference type="EC" id="2.3.1.51" evidence="2"/>
<dbReference type="EMBL" id="AABR07053681">
    <property type="status" value="NOT_ANNOTATED_CDS"/>
    <property type="molecule type" value="Genomic_DNA"/>
</dbReference>
<dbReference type="RefSeq" id="NP_001162001.1">
    <property type="nucleotide sequence ID" value="NM_001168529.1"/>
</dbReference>
<dbReference type="RefSeq" id="XP_006235018.1">
    <property type="nucleotide sequence ID" value="XM_006234956.3"/>
</dbReference>
<dbReference type="RefSeq" id="XP_038960497.1">
    <property type="nucleotide sequence ID" value="XM_039104569.1"/>
</dbReference>
<dbReference type="SMR" id="D3ZI76"/>
<dbReference type="FunCoup" id="D3ZI76">
    <property type="interactions" value="2"/>
</dbReference>
<dbReference type="STRING" id="10116.ENSRNOP00000018677"/>
<dbReference type="iPTMnet" id="D3ZI76"/>
<dbReference type="PhosphoSitePlus" id="D3ZI76"/>
<dbReference type="PaxDb" id="10116-ENSRNOP00000018677"/>
<dbReference type="Ensembl" id="ENSRNOT00000018677.7">
    <property type="protein sequence ID" value="ENSRNOP00000018677.5"/>
    <property type="gene ID" value="ENSRNOG00000013906.7"/>
</dbReference>
<dbReference type="GeneID" id="296130"/>
<dbReference type="KEGG" id="rno:296130"/>
<dbReference type="AGR" id="RGD:1304904"/>
<dbReference type="CTD" id="150763"/>
<dbReference type="RGD" id="1304904">
    <property type="gene designation" value="Gpat2"/>
</dbReference>
<dbReference type="eggNOG" id="KOG3729">
    <property type="taxonomic scope" value="Eukaryota"/>
</dbReference>
<dbReference type="GeneTree" id="ENSGT00520000055570"/>
<dbReference type="HOGENOM" id="CLU_016910_0_0_1"/>
<dbReference type="InParanoid" id="D3ZI76"/>
<dbReference type="OMA" id="QEYTTNA"/>
<dbReference type="OrthoDB" id="5962536at2759"/>
<dbReference type="PhylomeDB" id="D3ZI76"/>
<dbReference type="TreeFam" id="TF313360"/>
<dbReference type="BRENDA" id="2.3.1.15">
    <property type="organism ID" value="5301"/>
</dbReference>
<dbReference type="Reactome" id="R-RNO-1483166">
    <property type="pathway name" value="Synthesis of PA"/>
</dbReference>
<dbReference type="Reactome" id="R-RNO-75109">
    <property type="pathway name" value="Triglyceride biosynthesis"/>
</dbReference>
<dbReference type="UniPathway" id="UPA00557">
    <property type="reaction ID" value="UER00612"/>
</dbReference>
<dbReference type="PRO" id="PR:D3ZI76"/>
<dbReference type="Proteomes" id="UP000002494">
    <property type="component" value="Chromosome 3"/>
</dbReference>
<dbReference type="Bgee" id="ENSRNOG00000013906">
    <property type="expression patterns" value="Expressed in testis and 6 other cell types or tissues"/>
</dbReference>
<dbReference type="GO" id="GO:0005741">
    <property type="term" value="C:mitochondrial outer membrane"/>
    <property type="evidence" value="ECO:0000314"/>
    <property type="project" value="UniProtKB"/>
</dbReference>
<dbReference type="GO" id="GO:0005739">
    <property type="term" value="C:mitochondrion"/>
    <property type="evidence" value="ECO:0000266"/>
    <property type="project" value="RGD"/>
</dbReference>
<dbReference type="GO" id="GO:0003841">
    <property type="term" value="F:1-acylglycerol-3-phosphate O-acyltransferase activity"/>
    <property type="evidence" value="ECO:0000250"/>
    <property type="project" value="UniProtKB"/>
</dbReference>
<dbReference type="GO" id="GO:0004366">
    <property type="term" value="F:glycerol-3-phosphate O-acyltransferase activity"/>
    <property type="evidence" value="ECO:0000266"/>
    <property type="project" value="RGD"/>
</dbReference>
<dbReference type="GO" id="GO:0016024">
    <property type="term" value="P:CDP-diacylglycerol biosynthetic process"/>
    <property type="evidence" value="ECO:0007669"/>
    <property type="project" value="UniProtKB-UniPathway"/>
</dbReference>
<dbReference type="GO" id="GO:0006072">
    <property type="term" value="P:glycerol-3-phosphate metabolic process"/>
    <property type="evidence" value="ECO:0000266"/>
    <property type="project" value="RGD"/>
</dbReference>
<dbReference type="GO" id="GO:0006650">
    <property type="term" value="P:glycerophospholipid metabolic process"/>
    <property type="evidence" value="ECO:0000318"/>
    <property type="project" value="GO_Central"/>
</dbReference>
<dbReference type="GO" id="GO:0006654">
    <property type="term" value="P:phosphatidic acid biosynthetic process"/>
    <property type="evidence" value="ECO:0000250"/>
    <property type="project" value="UniProtKB"/>
</dbReference>
<dbReference type="GO" id="GO:0034587">
    <property type="term" value="P:piRNA processing"/>
    <property type="evidence" value="ECO:0000266"/>
    <property type="project" value="RGD"/>
</dbReference>
<dbReference type="GO" id="GO:0019432">
    <property type="term" value="P:triglyceride biosynthetic process"/>
    <property type="evidence" value="ECO:0000266"/>
    <property type="project" value="RGD"/>
</dbReference>
<dbReference type="CDD" id="cd07993">
    <property type="entry name" value="LPLAT_DHAPAT-like"/>
    <property type="match status" value="1"/>
</dbReference>
<dbReference type="InterPro" id="IPR022284">
    <property type="entry name" value="GPAT/DHAPAT"/>
</dbReference>
<dbReference type="InterPro" id="IPR045520">
    <property type="entry name" value="GPAT/DHAPAT_C"/>
</dbReference>
<dbReference type="InterPro" id="IPR041728">
    <property type="entry name" value="GPAT/DHAPAT_LPLAT"/>
</dbReference>
<dbReference type="InterPro" id="IPR002123">
    <property type="entry name" value="Plipid/glycerol_acylTrfase"/>
</dbReference>
<dbReference type="PANTHER" id="PTHR12563">
    <property type="entry name" value="GLYCEROL-3-PHOSPHATE ACYLTRANSFERASE"/>
    <property type="match status" value="1"/>
</dbReference>
<dbReference type="PANTHER" id="PTHR12563:SF15">
    <property type="entry name" value="GLYCEROL-3-PHOSPHATE ACYLTRANSFERASE 2, MITOCHONDRIAL"/>
    <property type="match status" value="1"/>
</dbReference>
<dbReference type="Pfam" id="PF01553">
    <property type="entry name" value="Acyltransferase"/>
    <property type="match status" value="1"/>
</dbReference>
<dbReference type="Pfam" id="PF19277">
    <property type="entry name" value="GPAT_C"/>
    <property type="match status" value="1"/>
</dbReference>
<dbReference type="SMART" id="SM00563">
    <property type="entry name" value="PlsC"/>
    <property type="match status" value="1"/>
</dbReference>
<dbReference type="SUPFAM" id="SSF69593">
    <property type="entry name" value="Glycerol-3-phosphate (1)-acyltransferase"/>
    <property type="match status" value="1"/>
</dbReference>
<accession>D3ZI76</accession>
<feature type="chain" id="PRO_0000450953" description="Glycerol-3-phosphate acyltransferase 2, mitochondrial">
    <location>
        <begin position="1"/>
        <end position="801"/>
    </location>
</feature>
<feature type="topological domain" description="Cytoplasmic" evidence="3">
    <location>
        <begin position="1"/>
        <end position="305"/>
    </location>
</feature>
<feature type="transmembrane region" description="Helical" evidence="3">
    <location>
        <begin position="306"/>
        <end position="332"/>
    </location>
</feature>
<feature type="topological domain" description="Mitochondrial intermembrane" evidence="3">
    <location>
        <begin position="333"/>
        <end position="449"/>
    </location>
</feature>
<feature type="transmembrane region" description="Helical" evidence="3">
    <location>
        <begin position="450"/>
        <end position="472"/>
    </location>
</feature>
<feature type="topological domain" description="Cytoplasmic" evidence="3">
    <location>
        <begin position="473"/>
        <end position="795"/>
    </location>
</feature>
<feature type="region of interest" description="Disordered" evidence="4">
    <location>
        <begin position="1"/>
        <end position="24"/>
    </location>
</feature>
<feature type="region of interest" description="Acyltransferase" evidence="2">
    <location>
        <begin position="180"/>
        <end position="290"/>
    </location>
</feature>
<feature type="short sequence motif" description="HXXXXD motif" evidence="2">
    <location>
        <begin position="205"/>
        <end position="210"/>
    </location>
</feature>
<gene>
    <name evidence="7" type="primary">Gpat2</name>
</gene>